<accession>A5CC96</accession>
<comment type="function">
    <text evidence="1">Binds directly to 23S rRNA. The L1 stalk is quite mobile in the ribosome, and is involved in E site tRNA release.</text>
</comment>
<comment type="function">
    <text evidence="1">Protein L1 is also a translational repressor protein, it controls the translation of the L11 operon by binding to its mRNA.</text>
</comment>
<comment type="subunit">
    <text evidence="1">Part of the 50S ribosomal subunit.</text>
</comment>
<comment type="similarity">
    <text evidence="1">Belongs to the universal ribosomal protein uL1 family.</text>
</comment>
<reference key="1">
    <citation type="journal article" date="2007" name="Proc. Natl. Acad. Sci. U.S.A.">
        <title>The Orientia tsutsugamushi genome reveals massive proliferation of conjugative type IV secretion system and host-cell interaction genes.</title>
        <authorList>
            <person name="Cho N.-H."/>
            <person name="Kim H.-R."/>
            <person name="Lee J.-H."/>
            <person name="Kim S.-Y."/>
            <person name="Kim J."/>
            <person name="Cha S."/>
            <person name="Kim S.-Y."/>
            <person name="Darby A.C."/>
            <person name="Fuxelius H.-H."/>
            <person name="Yin J."/>
            <person name="Kim J.H."/>
            <person name="Kim J."/>
            <person name="Lee S.J."/>
            <person name="Koh Y.-S."/>
            <person name="Jang W.-J."/>
            <person name="Park K.-H."/>
            <person name="Andersson S.G.E."/>
            <person name="Choi M.-S."/>
            <person name="Kim I.-S."/>
        </authorList>
    </citation>
    <scope>NUCLEOTIDE SEQUENCE [LARGE SCALE GENOMIC DNA]</scope>
    <source>
        <strain>Boryong</strain>
    </source>
</reference>
<proteinExistence type="inferred from homology"/>
<keyword id="KW-1185">Reference proteome</keyword>
<keyword id="KW-0678">Repressor</keyword>
<keyword id="KW-0687">Ribonucleoprotein</keyword>
<keyword id="KW-0689">Ribosomal protein</keyword>
<keyword id="KW-0694">RNA-binding</keyword>
<keyword id="KW-0699">rRNA-binding</keyword>
<keyword id="KW-0810">Translation regulation</keyword>
<keyword id="KW-0820">tRNA-binding</keyword>
<protein>
    <recommendedName>
        <fullName evidence="1">Large ribosomal subunit protein uL1</fullName>
    </recommendedName>
    <alternativeName>
        <fullName evidence="2">50S ribosomal protein L1</fullName>
    </alternativeName>
</protein>
<feature type="chain" id="PRO_0000307658" description="Large ribosomal subunit protein uL1">
    <location>
        <begin position="1"/>
        <end position="248"/>
    </location>
</feature>
<gene>
    <name evidence="1" type="primary">rplA</name>
    <name type="ordered locus">OTBS_0211</name>
</gene>
<evidence type="ECO:0000255" key="1">
    <source>
        <dbReference type="HAMAP-Rule" id="MF_01318"/>
    </source>
</evidence>
<evidence type="ECO:0000305" key="2"/>
<name>RL1_ORITB</name>
<organism>
    <name type="scientific">Orientia tsutsugamushi (strain Boryong)</name>
    <name type="common">Rickettsia tsutsugamushi</name>
    <dbReference type="NCBI Taxonomy" id="357244"/>
    <lineage>
        <taxon>Bacteria</taxon>
        <taxon>Pseudomonadati</taxon>
        <taxon>Pseudomonadota</taxon>
        <taxon>Alphaproteobacteria</taxon>
        <taxon>Rickettsiales</taxon>
        <taxon>Rickettsiaceae</taxon>
        <taxon>Rickettsieae</taxon>
        <taxon>Orientia</taxon>
    </lineage>
</organism>
<dbReference type="EMBL" id="AM494475">
    <property type="protein sequence ID" value="CAM79277.1"/>
    <property type="molecule type" value="Genomic_DNA"/>
</dbReference>
<dbReference type="RefSeq" id="WP_011944335.1">
    <property type="nucleotide sequence ID" value="NC_009488.1"/>
</dbReference>
<dbReference type="SMR" id="A5CC96"/>
<dbReference type="KEGG" id="ots:OTBS_0211"/>
<dbReference type="eggNOG" id="COG0081">
    <property type="taxonomic scope" value="Bacteria"/>
</dbReference>
<dbReference type="HOGENOM" id="CLU_062853_0_0_5"/>
<dbReference type="Proteomes" id="UP000001565">
    <property type="component" value="Chromosome"/>
</dbReference>
<dbReference type="GO" id="GO:0015934">
    <property type="term" value="C:large ribosomal subunit"/>
    <property type="evidence" value="ECO:0007669"/>
    <property type="project" value="InterPro"/>
</dbReference>
<dbReference type="GO" id="GO:0019843">
    <property type="term" value="F:rRNA binding"/>
    <property type="evidence" value="ECO:0007669"/>
    <property type="project" value="UniProtKB-UniRule"/>
</dbReference>
<dbReference type="GO" id="GO:0003735">
    <property type="term" value="F:structural constituent of ribosome"/>
    <property type="evidence" value="ECO:0007669"/>
    <property type="project" value="InterPro"/>
</dbReference>
<dbReference type="GO" id="GO:0000049">
    <property type="term" value="F:tRNA binding"/>
    <property type="evidence" value="ECO:0007669"/>
    <property type="project" value="UniProtKB-KW"/>
</dbReference>
<dbReference type="GO" id="GO:0006417">
    <property type="term" value="P:regulation of translation"/>
    <property type="evidence" value="ECO:0007669"/>
    <property type="project" value="UniProtKB-KW"/>
</dbReference>
<dbReference type="GO" id="GO:0006412">
    <property type="term" value="P:translation"/>
    <property type="evidence" value="ECO:0007669"/>
    <property type="project" value="UniProtKB-UniRule"/>
</dbReference>
<dbReference type="CDD" id="cd00403">
    <property type="entry name" value="Ribosomal_L1"/>
    <property type="match status" value="1"/>
</dbReference>
<dbReference type="FunFam" id="3.40.50.790:FF:000001">
    <property type="entry name" value="50S ribosomal protein L1"/>
    <property type="match status" value="1"/>
</dbReference>
<dbReference type="Gene3D" id="3.30.190.20">
    <property type="match status" value="1"/>
</dbReference>
<dbReference type="Gene3D" id="3.40.50.790">
    <property type="match status" value="1"/>
</dbReference>
<dbReference type="HAMAP" id="MF_01318_B">
    <property type="entry name" value="Ribosomal_uL1_B"/>
    <property type="match status" value="1"/>
</dbReference>
<dbReference type="InterPro" id="IPR005878">
    <property type="entry name" value="Ribosom_uL1_bac-type"/>
</dbReference>
<dbReference type="InterPro" id="IPR002143">
    <property type="entry name" value="Ribosomal_uL1"/>
</dbReference>
<dbReference type="InterPro" id="IPR023674">
    <property type="entry name" value="Ribosomal_uL1-like"/>
</dbReference>
<dbReference type="InterPro" id="IPR028364">
    <property type="entry name" value="Ribosomal_uL1/biogenesis"/>
</dbReference>
<dbReference type="InterPro" id="IPR016095">
    <property type="entry name" value="Ribosomal_uL1_3-a/b-sand"/>
</dbReference>
<dbReference type="InterPro" id="IPR023673">
    <property type="entry name" value="Ribosomal_uL1_CS"/>
</dbReference>
<dbReference type="NCBIfam" id="TIGR01169">
    <property type="entry name" value="rplA_bact"/>
    <property type="match status" value="1"/>
</dbReference>
<dbReference type="PANTHER" id="PTHR36427">
    <property type="entry name" value="54S RIBOSOMAL PROTEIN L1, MITOCHONDRIAL"/>
    <property type="match status" value="1"/>
</dbReference>
<dbReference type="PANTHER" id="PTHR36427:SF3">
    <property type="entry name" value="LARGE RIBOSOMAL SUBUNIT PROTEIN UL1M"/>
    <property type="match status" value="1"/>
</dbReference>
<dbReference type="Pfam" id="PF00687">
    <property type="entry name" value="Ribosomal_L1"/>
    <property type="match status" value="1"/>
</dbReference>
<dbReference type="PIRSF" id="PIRSF002155">
    <property type="entry name" value="Ribosomal_L1"/>
    <property type="match status" value="1"/>
</dbReference>
<dbReference type="SUPFAM" id="SSF56808">
    <property type="entry name" value="Ribosomal protein L1"/>
    <property type="match status" value="1"/>
</dbReference>
<dbReference type="PROSITE" id="PS01199">
    <property type="entry name" value="RIBOSOMAL_L1"/>
    <property type="match status" value="1"/>
</dbReference>
<sequence>MLNINNKIAKGGYVYSKNIRLAKSKIDKQKCYDVREACSIIKEISFAKFNETVDIAIKLGVNPSHSSQVVRGVAAMPSGTGKTVKVAVICQEEKLDEFKTTGADIVGSLDIIEAIKSGNIDYDVYITTPAMMVAVSQVARILGPKGLMPNPKLGTVTNDVAAVVKKVKSGQVEFKVDKAGNIHAGIGKISFSIDEIEANINALVSAIIKSKPSEAKGTYLNGIYLSTTMGPSVRLEISNFTESGNERR</sequence>